<accession>Q5E7L5</accession>
<evidence type="ECO:0000250" key="1"/>
<evidence type="ECO:0000255" key="2">
    <source>
        <dbReference type="HAMAP-Rule" id="MF_00100"/>
    </source>
</evidence>
<evidence type="ECO:0000256" key="3">
    <source>
        <dbReference type="SAM" id="MobiDB-lite"/>
    </source>
</evidence>
<keyword id="KW-0963">Cytoplasm</keyword>
<keyword id="KW-0342">GTP-binding</keyword>
<keyword id="KW-0396">Initiation factor</keyword>
<keyword id="KW-0547">Nucleotide-binding</keyword>
<keyword id="KW-0648">Protein biosynthesis</keyword>
<keyword id="KW-1185">Reference proteome</keyword>
<protein>
    <recommendedName>
        <fullName evidence="2">Translation initiation factor IF-2</fullName>
    </recommendedName>
</protein>
<sequence length="893" mass="97555">MTKLTVKALSEEIGTPVDRLLQQFSDAGINKKDGDSVTESEKQSLLVHLKKEHGSVDDSASPTRLTLQRKTRSTLSVAGSGGKSKDVQVEVRKKRTYVKASALEEEKKAEQLKAEAEEQAKRDAEEAAVRELEQKAQREAEEQAKREAEAEAKAKREAEEKAKRAEADKAKKEMTKKNEQAKKEAEELKARQELEATRKAEAEAAKLVEEARKLAEENEARWKEEEQKKSAAEKDADYHVTTSSHAREAEDAADRKEEQQPRRRKKKAKPAEAAAPRGGRNQRGGRNKKAQVNKPTSMQHGFDKSATVAKQDVAIGETIVVSELASKMSVKATEVIKVMMKMGAMATINQVIDQETAQLVAEEMGHKVILRKENELEEAVLSDRDNSAEAEGRAPVVTIMGHVDHGKTSTLDYIRRAHVADAEAGGITQHIGAYHVETDNGMITFLDTPGHAAFTAMRARGAQATDIVVLVVAADDGVMPQTIEAIQHAKAAGVPLIVAVNKIDKEDANPDNVKNELAQYDVIPEEWGGENMFVHISAKQGTNIDGLLEAILLQSEVLELTAVREGMASGVVVESRLDKGRGPVATVLVQSGTLNKGDIVLCGQEYGRVRAMRDENGKEIESAGPSIPVEILGLSGVPASGDEATVVRDERKAREVANYRQGKFRDVKLARQQKAKLENMFSNMTAGEVAELNVVLKADVQGSVEAIADSLRKLSTDEVKVNIVGSGVGGITETDAVLAAASNAIILGFNVRADATARRTIENENLDLRYYSIIYQLIDEVKAAMGGMLAPEFKQEIIGLAQVRDVFKSPKLGAIAGCMVTEGTIKRSNPIRVLRDNVVIYEGELESLRRFKDDVAEVKNGYECGIGVKNYNDVRVGDQIEVFEIVEIKRTLD</sequence>
<organism>
    <name type="scientific">Aliivibrio fischeri (strain ATCC 700601 / ES114)</name>
    <name type="common">Vibrio fischeri</name>
    <dbReference type="NCBI Taxonomy" id="312309"/>
    <lineage>
        <taxon>Bacteria</taxon>
        <taxon>Pseudomonadati</taxon>
        <taxon>Pseudomonadota</taxon>
        <taxon>Gammaproteobacteria</taxon>
        <taxon>Vibrionales</taxon>
        <taxon>Vibrionaceae</taxon>
        <taxon>Aliivibrio</taxon>
    </lineage>
</organism>
<gene>
    <name evidence="2" type="primary">infB</name>
    <name type="ordered locus">VF_0486</name>
</gene>
<name>IF2_ALIF1</name>
<dbReference type="EMBL" id="CP000020">
    <property type="protein sequence ID" value="AAW84981.1"/>
    <property type="molecule type" value="Genomic_DNA"/>
</dbReference>
<dbReference type="RefSeq" id="WP_011261258.1">
    <property type="nucleotide sequence ID" value="NC_006840.2"/>
</dbReference>
<dbReference type="RefSeq" id="YP_203869.1">
    <property type="nucleotide sequence ID" value="NC_006840.2"/>
</dbReference>
<dbReference type="SMR" id="Q5E7L5"/>
<dbReference type="STRING" id="312309.VF_0486"/>
<dbReference type="EnsemblBacteria" id="AAW84981">
    <property type="protein sequence ID" value="AAW84981"/>
    <property type="gene ID" value="VF_0486"/>
</dbReference>
<dbReference type="GeneID" id="54163123"/>
<dbReference type="KEGG" id="vfi:VF_0486"/>
<dbReference type="PATRIC" id="fig|312309.11.peg.476"/>
<dbReference type="eggNOG" id="COG0532">
    <property type="taxonomic scope" value="Bacteria"/>
</dbReference>
<dbReference type="HOGENOM" id="CLU_006301_6_3_6"/>
<dbReference type="OrthoDB" id="9811804at2"/>
<dbReference type="Proteomes" id="UP000000537">
    <property type="component" value="Chromosome I"/>
</dbReference>
<dbReference type="GO" id="GO:0005829">
    <property type="term" value="C:cytosol"/>
    <property type="evidence" value="ECO:0007669"/>
    <property type="project" value="TreeGrafter"/>
</dbReference>
<dbReference type="GO" id="GO:0005525">
    <property type="term" value="F:GTP binding"/>
    <property type="evidence" value="ECO:0007669"/>
    <property type="project" value="UniProtKB-KW"/>
</dbReference>
<dbReference type="GO" id="GO:0003924">
    <property type="term" value="F:GTPase activity"/>
    <property type="evidence" value="ECO:0007669"/>
    <property type="project" value="UniProtKB-UniRule"/>
</dbReference>
<dbReference type="GO" id="GO:0097216">
    <property type="term" value="F:guanosine tetraphosphate binding"/>
    <property type="evidence" value="ECO:0007669"/>
    <property type="project" value="UniProtKB-ARBA"/>
</dbReference>
<dbReference type="GO" id="GO:0003743">
    <property type="term" value="F:translation initiation factor activity"/>
    <property type="evidence" value="ECO:0007669"/>
    <property type="project" value="UniProtKB-UniRule"/>
</dbReference>
<dbReference type="CDD" id="cd01887">
    <property type="entry name" value="IF2_eIF5B"/>
    <property type="match status" value="1"/>
</dbReference>
<dbReference type="CDD" id="cd03702">
    <property type="entry name" value="IF2_mtIF2_II"/>
    <property type="match status" value="1"/>
</dbReference>
<dbReference type="CDD" id="cd03692">
    <property type="entry name" value="mtIF2_IVc"/>
    <property type="match status" value="1"/>
</dbReference>
<dbReference type="FunFam" id="2.40.30.10:FF:000007">
    <property type="entry name" value="Translation initiation factor IF-2"/>
    <property type="match status" value="1"/>
</dbReference>
<dbReference type="FunFam" id="2.40.30.10:FF:000008">
    <property type="entry name" value="Translation initiation factor IF-2"/>
    <property type="match status" value="1"/>
</dbReference>
<dbReference type="FunFam" id="3.40.50.10050:FF:000001">
    <property type="entry name" value="Translation initiation factor IF-2"/>
    <property type="match status" value="1"/>
</dbReference>
<dbReference type="FunFam" id="3.40.50.300:FF:000019">
    <property type="entry name" value="Translation initiation factor IF-2"/>
    <property type="match status" value="1"/>
</dbReference>
<dbReference type="Gene3D" id="3.40.50.300">
    <property type="entry name" value="P-loop containing nucleotide triphosphate hydrolases"/>
    <property type="match status" value="1"/>
</dbReference>
<dbReference type="Gene3D" id="3.30.56.50">
    <property type="entry name" value="Putative DNA-binding domain, N-terminal subdomain of bacterial translation initiation factor IF2"/>
    <property type="match status" value="1"/>
</dbReference>
<dbReference type="Gene3D" id="2.40.30.10">
    <property type="entry name" value="Translation factors"/>
    <property type="match status" value="2"/>
</dbReference>
<dbReference type="Gene3D" id="3.40.50.10050">
    <property type="entry name" value="Translation initiation factor IF- 2, domain 3"/>
    <property type="match status" value="1"/>
</dbReference>
<dbReference type="HAMAP" id="MF_00100_B">
    <property type="entry name" value="IF_2_B"/>
    <property type="match status" value="1"/>
</dbReference>
<dbReference type="InterPro" id="IPR009061">
    <property type="entry name" value="DNA-bd_dom_put_sf"/>
</dbReference>
<dbReference type="InterPro" id="IPR053905">
    <property type="entry name" value="EF-G-like_DII"/>
</dbReference>
<dbReference type="InterPro" id="IPR004161">
    <property type="entry name" value="EFTu-like_2"/>
</dbReference>
<dbReference type="InterPro" id="IPR013575">
    <property type="entry name" value="IF2_assoc_dom_bac"/>
</dbReference>
<dbReference type="InterPro" id="IPR044145">
    <property type="entry name" value="IF2_II"/>
</dbReference>
<dbReference type="InterPro" id="IPR006847">
    <property type="entry name" value="IF2_N"/>
</dbReference>
<dbReference type="InterPro" id="IPR027417">
    <property type="entry name" value="P-loop_NTPase"/>
</dbReference>
<dbReference type="InterPro" id="IPR005225">
    <property type="entry name" value="Small_GTP-bd"/>
</dbReference>
<dbReference type="InterPro" id="IPR000795">
    <property type="entry name" value="T_Tr_GTP-bd_dom"/>
</dbReference>
<dbReference type="InterPro" id="IPR000178">
    <property type="entry name" value="TF_IF2_bacterial-like"/>
</dbReference>
<dbReference type="InterPro" id="IPR015760">
    <property type="entry name" value="TIF_IF2"/>
</dbReference>
<dbReference type="InterPro" id="IPR023115">
    <property type="entry name" value="TIF_IF2_dom3"/>
</dbReference>
<dbReference type="InterPro" id="IPR036925">
    <property type="entry name" value="TIF_IF2_dom3_sf"/>
</dbReference>
<dbReference type="InterPro" id="IPR009000">
    <property type="entry name" value="Transl_B-barrel_sf"/>
</dbReference>
<dbReference type="NCBIfam" id="TIGR00487">
    <property type="entry name" value="IF-2"/>
    <property type="match status" value="1"/>
</dbReference>
<dbReference type="NCBIfam" id="TIGR00231">
    <property type="entry name" value="small_GTP"/>
    <property type="match status" value="1"/>
</dbReference>
<dbReference type="PANTHER" id="PTHR43381:SF5">
    <property type="entry name" value="TR-TYPE G DOMAIN-CONTAINING PROTEIN"/>
    <property type="match status" value="1"/>
</dbReference>
<dbReference type="PANTHER" id="PTHR43381">
    <property type="entry name" value="TRANSLATION INITIATION FACTOR IF-2-RELATED"/>
    <property type="match status" value="1"/>
</dbReference>
<dbReference type="Pfam" id="PF22042">
    <property type="entry name" value="EF-G_D2"/>
    <property type="match status" value="1"/>
</dbReference>
<dbReference type="Pfam" id="PF00009">
    <property type="entry name" value="GTP_EFTU"/>
    <property type="match status" value="1"/>
</dbReference>
<dbReference type="Pfam" id="PF03144">
    <property type="entry name" value="GTP_EFTU_D2"/>
    <property type="match status" value="1"/>
</dbReference>
<dbReference type="Pfam" id="PF11987">
    <property type="entry name" value="IF-2"/>
    <property type="match status" value="1"/>
</dbReference>
<dbReference type="Pfam" id="PF08364">
    <property type="entry name" value="IF2_assoc"/>
    <property type="match status" value="1"/>
</dbReference>
<dbReference type="Pfam" id="PF04760">
    <property type="entry name" value="IF2_N"/>
    <property type="match status" value="2"/>
</dbReference>
<dbReference type="SUPFAM" id="SSF52156">
    <property type="entry name" value="Initiation factor IF2/eIF5b, domain 3"/>
    <property type="match status" value="1"/>
</dbReference>
<dbReference type="SUPFAM" id="SSF52540">
    <property type="entry name" value="P-loop containing nucleoside triphosphate hydrolases"/>
    <property type="match status" value="1"/>
</dbReference>
<dbReference type="SUPFAM" id="SSF46955">
    <property type="entry name" value="Putative DNA-binding domain"/>
    <property type="match status" value="1"/>
</dbReference>
<dbReference type="SUPFAM" id="SSF50447">
    <property type="entry name" value="Translation proteins"/>
    <property type="match status" value="2"/>
</dbReference>
<dbReference type="PROSITE" id="PS51722">
    <property type="entry name" value="G_TR_2"/>
    <property type="match status" value="1"/>
</dbReference>
<dbReference type="PROSITE" id="PS01176">
    <property type="entry name" value="IF2"/>
    <property type="match status" value="1"/>
</dbReference>
<feature type="chain" id="PRO_0000228258" description="Translation initiation factor IF-2">
    <location>
        <begin position="1"/>
        <end position="893"/>
    </location>
</feature>
<feature type="domain" description="tr-type G">
    <location>
        <begin position="392"/>
        <end position="561"/>
    </location>
</feature>
<feature type="region of interest" description="Disordered" evidence="3">
    <location>
        <begin position="51"/>
        <end position="203"/>
    </location>
</feature>
<feature type="region of interest" description="Disordered" evidence="3">
    <location>
        <begin position="216"/>
        <end position="299"/>
    </location>
</feature>
<feature type="region of interest" description="G1" evidence="1">
    <location>
        <begin position="401"/>
        <end position="408"/>
    </location>
</feature>
<feature type="region of interest" description="G2" evidence="1">
    <location>
        <begin position="426"/>
        <end position="430"/>
    </location>
</feature>
<feature type="region of interest" description="G3" evidence="1">
    <location>
        <begin position="447"/>
        <end position="450"/>
    </location>
</feature>
<feature type="region of interest" description="G4" evidence="1">
    <location>
        <begin position="501"/>
        <end position="504"/>
    </location>
</feature>
<feature type="region of interest" description="G5" evidence="1">
    <location>
        <begin position="537"/>
        <end position="539"/>
    </location>
</feature>
<feature type="compositionally biased region" description="Basic and acidic residues" evidence="3">
    <location>
        <begin position="102"/>
        <end position="203"/>
    </location>
</feature>
<feature type="compositionally biased region" description="Basic and acidic residues" evidence="3">
    <location>
        <begin position="216"/>
        <end position="238"/>
    </location>
</feature>
<feature type="compositionally biased region" description="Basic and acidic residues" evidence="3">
    <location>
        <begin position="245"/>
        <end position="261"/>
    </location>
</feature>
<feature type="binding site" evidence="2">
    <location>
        <begin position="401"/>
        <end position="408"/>
    </location>
    <ligand>
        <name>GTP</name>
        <dbReference type="ChEBI" id="CHEBI:37565"/>
    </ligand>
</feature>
<feature type="binding site" evidence="2">
    <location>
        <begin position="447"/>
        <end position="451"/>
    </location>
    <ligand>
        <name>GTP</name>
        <dbReference type="ChEBI" id="CHEBI:37565"/>
    </ligand>
</feature>
<feature type="binding site" evidence="2">
    <location>
        <begin position="501"/>
        <end position="504"/>
    </location>
    <ligand>
        <name>GTP</name>
        <dbReference type="ChEBI" id="CHEBI:37565"/>
    </ligand>
</feature>
<comment type="function">
    <text evidence="2">One of the essential components for the initiation of protein synthesis. Protects formylmethionyl-tRNA from spontaneous hydrolysis and promotes its binding to the 30S ribosomal subunits. Also involved in the hydrolysis of GTP during the formation of the 70S ribosomal complex.</text>
</comment>
<comment type="subcellular location">
    <subcellularLocation>
        <location evidence="2">Cytoplasm</location>
    </subcellularLocation>
</comment>
<comment type="similarity">
    <text evidence="2">Belongs to the TRAFAC class translation factor GTPase superfamily. Classic translation factor GTPase family. IF-2 subfamily.</text>
</comment>
<reference key="1">
    <citation type="journal article" date="2005" name="Proc. Natl. Acad. Sci. U.S.A.">
        <title>Complete genome sequence of Vibrio fischeri: a symbiotic bacterium with pathogenic congeners.</title>
        <authorList>
            <person name="Ruby E.G."/>
            <person name="Urbanowski M."/>
            <person name="Campbell J."/>
            <person name="Dunn A."/>
            <person name="Faini M."/>
            <person name="Gunsalus R."/>
            <person name="Lostroh P."/>
            <person name="Lupp C."/>
            <person name="McCann J."/>
            <person name="Millikan D."/>
            <person name="Schaefer A."/>
            <person name="Stabb E."/>
            <person name="Stevens A."/>
            <person name="Visick K."/>
            <person name="Whistler C."/>
            <person name="Greenberg E.P."/>
        </authorList>
    </citation>
    <scope>NUCLEOTIDE SEQUENCE [LARGE SCALE GENOMIC DNA]</scope>
    <source>
        <strain>ATCC 700601 / ES114</strain>
    </source>
</reference>
<proteinExistence type="inferred from homology"/>